<evidence type="ECO:0000255" key="1">
    <source>
        <dbReference type="HAMAP-Rule" id="MF_00316"/>
    </source>
</evidence>
<feature type="chain" id="PRO_1000019113" description="Molybdenum cofactor guanylyltransferase">
    <location>
        <begin position="1"/>
        <end position="191"/>
    </location>
</feature>
<feature type="binding site" evidence="1">
    <location>
        <begin position="11"/>
        <end position="13"/>
    </location>
    <ligand>
        <name>GTP</name>
        <dbReference type="ChEBI" id="CHEBI:37565"/>
    </ligand>
</feature>
<feature type="binding site" evidence="1">
    <location>
        <position position="23"/>
    </location>
    <ligand>
        <name>GTP</name>
        <dbReference type="ChEBI" id="CHEBI:37565"/>
    </ligand>
</feature>
<feature type="binding site" evidence="1">
    <location>
        <position position="66"/>
    </location>
    <ligand>
        <name>GTP</name>
        <dbReference type="ChEBI" id="CHEBI:37565"/>
    </ligand>
</feature>
<feature type="binding site" evidence="1">
    <location>
        <position position="97"/>
    </location>
    <ligand>
        <name>GTP</name>
        <dbReference type="ChEBI" id="CHEBI:37565"/>
    </ligand>
</feature>
<feature type="binding site" evidence="1">
    <location>
        <position position="97"/>
    </location>
    <ligand>
        <name>Mg(2+)</name>
        <dbReference type="ChEBI" id="CHEBI:18420"/>
    </ligand>
</feature>
<protein>
    <recommendedName>
        <fullName evidence="1">Molybdenum cofactor guanylyltransferase</fullName>
        <shortName evidence="1">MoCo guanylyltransferase</shortName>
        <ecNumber evidence="1">2.7.7.77</ecNumber>
    </recommendedName>
    <alternativeName>
        <fullName evidence="1">GTP:molybdopterin guanylyltransferase</fullName>
    </alternativeName>
    <alternativeName>
        <fullName evidence="1">Mo-MPT guanylyltransferase</fullName>
    </alternativeName>
    <alternativeName>
        <fullName evidence="1">Molybdopterin guanylyltransferase</fullName>
    </alternativeName>
    <alternativeName>
        <fullName evidence="1">Molybdopterin-guanine dinucleotide synthase</fullName>
        <shortName evidence="1">MGD synthase</shortName>
    </alternativeName>
</protein>
<accession>A7H239</accession>
<reference key="1">
    <citation type="submission" date="2007-07" db="EMBL/GenBank/DDBJ databases">
        <title>Complete genome sequence of Campylobacter jejuni subsp doylei 269.97 isolated from human blood.</title>
        <authorList>
            <person name="Fouts D.E."/>
            <person name="Mongodin E.F."/>
            <person name="Puiu D."/>
            <person name="Sebastian Y."/>
            <person name="Miller W.G."/>
            <person name="Mandrell R.E."/>
            <person name="Lastovica A.J."/>
            <person name="Nelson K.E."/>
        </authorList>
    </citation>
    <scope>NUCLEOTIDE SEQUENCE [LARGE SCALE GENOMIC DNA]</scope>
    <source>
        <strain>ATCC BAA-1458 / RM4099 / 269.97</strain>
    </source>
</reference>
<keyword id="KW-0963">Cytoplasm</keyword>
<keyword id="KW-0342">GTP-binding</keyword>
<keyword id="KW-0460">Magnesium</keyword>
<keyword id="KW-0479">Metal-binding</keyword>
<keyword id="KW-0501">Molybdenum cofactor biosynthesis</keyword>
<keyword id="KW-0547">Nucleotide-binding</keyword>
<keyword id="KW-0808">Transferase</keyword>
<proteinExistence type="inferred from homology"/>
<comment type="function">
    <text evidence="1">Transfers a GMP moiety from GTP to Mo-molybdopterin (Mo-MPT) cofactor (Moco or molybdenum cofactor) to form Mo-molybdopterin guanine dinucleotide (Mo-MGD) cofactor.</text>
</comment>
<comment type="catalytic activity">
    <reaction evidence="1">
        <text>Mo-molybdopterin + GTP + H(+) = Mo-molybdopterin guanine dinucleotide + diphosphate</text>
        <dbReference type="Rhea" id="RHEA:34243"/>
        <dbReference type="ChEBI" id="CHEBI:15378"/>
        <dbReference type="ChEBI" id="CHEBI:33019"/>
        <dbReference type="ChEBI" id="CHEBI:37565"/>
        <dbReference type="ChEBI" id="CHEBI:71302"/>
        <dbReference type="ChEBI" id="CHEBI:71310"/>
        <dbReference type="EC" id="2.7.7.77"/>
    </reaction>
</comment>
<comment type="cofactor">
    <cofactor evidence="1">
        <name>Mg(2+)</name>
        <dbReference type="ChEBI" id="CHEBI:18420"/>
    </cofactor>
</comment>
<comment type="subunit">
    <text evidence="1">Monomer.</text>
</comment>
<comment type="subcellular location">
    <subcellularLocation>
        <location evidence="1">Cytoplasm</location>
    </subcellularLocation>
</comment>
<comment type="domain">
    <text evidence="1">The N-terminal domain determines nucleotide recognition and specific binding, while the C-terminal domain determines the specific binding to the target protein.</text>
</comment>
<comment type="similarity">
    <text evidence="1">Belongs to the MobA family.</text>
</comment>
<gene>
    <name evidence="1" type="primary">mobA</name>
    <name type="ordered locus">JJD26997_0360</name>
</gene>
<sequence>MQLNELNCVILCGGKSSRMGQDKSKLILKNQNLTQFQVNKFSKIFKNVYVSAKEDKFENHFNLIKDSLEFEVYSPMLALYSILSNFKNEFVFVLSVDSPKVGENELLKMLPFLEQNYKIIIAKTPLHKHPLCGFYHSSLAQTCKNFLEKNEQKIGFLFSEIKTKFVEFENEDAFLNLNFYEEYEKFKSELK</sequence>
<dbReference type="EC" id="2.7.7.77" evidence="1"/>
<dbReference type="EMBL" id="CP000768">
    <property type="protein sequence ID" value="ABS44477.1"/>
    <property type="molecule type" value="Genomic_DNA"/>
</dbReference>
<dbReference type="SMR" id="A7H239"/>
<dbReference type="KEGG" id="cjd:JJD26997_0360"/>
<dbReference type="HOGENOM" id="CLU_055597_2_2_7"/>
<dbReference type="Proteomes" id="UP000002302">
    <property type="component" value="Chromosome"/>
</dbReference>
<dbReference type="GO" id="GO:0005737">
    <property type="term" value="C:cytoplasm"/>
    <property type="evidence" value="ECO:0007669"/>
    <property type="project" value="UniProtKB-SubCell"/>
</dbReference>
<dbReference type="GO" id="GO:0005525">
    <property type="term" value="F:GTP binding"/>
    <property type="evidence" value="ECO:0007669"/>
    <property type="project" value="UniProtKB-UniRule"/>
</dbReference>
<dbReference type="GO" id="GO:0046872">
    <property type="term" value="F:metal ion binding"/>
    <property type="evidence" value="ECO:0007669"/>
    <property type="project" value="UniProtKB-KW"/>
</dbReference>
<dbReference type="GO" id="GO:0061603">
    <property type="term" value="F:molybdenum cofactor guanylyltransferase activity"/>
    <property type="evidence" value="ECO:0007669"/>
    <property type="project" value="UniProtKB-EC"/>
</dbReference>
<dbReference type="GO" id="GO:1902758">
    <property type="term" value="P:bis(molybdopterin guanine dinucleotide)molybdenum biosynthetic process"/>
    <property type="evidence" value="ECO:0007669"/>
    <property type="project" value="TreeGrafter"/>
</dbReference>
<dbReference type="CDD" id="cd02503">
    <property type="entry name" value="MobA"/>
    <property type="match status" value="1"/>
</dbReference>
<dbReference type="FunFam" id="3.90.550.10:FF:000199">
    <property type="entry name" value="Molybdenum cofactor guanylyltransferase"/>
    <property type="match status" value="1"/>
</dbReference>
<dbReference type="Gene3D" id="3.90.550.10">
    <property type="entry name" value="Spore Coat Polysaccharide Biosynthesis Protein SpsA, Chain A"/>
    <property type="match status" value="1"/>
</dbReference>
<dbReference type="HAMAP" id="MF_00316">
    <property type="entry name" value="MobA"/>
    <property type="match status" value="1"/>
</dbReference>
<dbReference type="InterPro" id="IPR025877">
    <property type="entry name" value="MobA-like_NTP_Trfase"/>
</dbReference>
<dbReference type="InterPro" id="IPR013482">
    <property type="entry name" value="Molybde_CF_guanTrfase"/>
</dbReference>
<dbReference type="InterPro" id="IPR029044">
    <property type="entry name" value="Nucleotide-diphossugar_trans"/>
</dbReference>
<dbReference type="PANTHER" id="PTHR19136">
    <property type="entry name" value="MOLYBDENUM COFACTOR GUANYLYLTRANSFERASE"/>
    <property type="match status" value="1"/>
</dbReference>
<dbReference type="PANTHER" id="PTHR19136:SF81">
    <property type="entry name" value="MOLYBDENUM COFACTOR GUANYLYLTRANSFERASE"/>
    <property type="match status" value="1"/>
</dbReference>
<dbReference type="Pfam" id="PF12804">
    <property type="entry name" value="NTP_transf_3"/>
    <property type="match status" value="1"/>
</dbReference>
<dbReference type="SUPFAM" id="SSF53448">
    <property type="entry name" value="Nucleotide-diphospho-sugar transferases"/>
    <property type="match status" value="1"/>
</dbReference>
<name>MOBA_CAMJD</name>
<organism>
    <name type="scientific">Campylobacter jejuni subsp. doylei (strain ATCC BAA-1458 / RM4099 / 269.97)</name>
    <dbReference type="NCBI Taxonomy" id="360109"/>
    <lineage>
        <taxon>Bacteria</taxon>
        <taxon>Pseudomonadati</taxon>
        <taxon>Campylobacterota</taxon>
        <taxon>Epsilonproteobacteria</taxon>
        <taxon>Campylobacterales</taxon>
        <taxon>Campylobacteraceae</taxon>
        <taxon>Campylobacter</taxon>
    </lineage>
</organism>